<comment type="function">
    <text evidence="1">The enzymes which catalyze the reversible phosphorolysis of pyrimidine nucleosides are involved in the degradation of these compounds and in their utilization as carbon and energy sources, or in the rescue of pyrimidine bases for nucleotide synthesis.</text>
</comment>
<comment type="catalytic activity">
    <reaction evidence="1">
        <text>thymidine + phosphate = 2-deoxy-alpha-D-ribose 1-phosphate + thymine</text>
        <dbReference type="Rhea" id="RHEA:16037"/>
        <dbReference type="ChEBI" id="CHEBI:17748"/>
        <dbReference type="ChEBI" id="CHEBI:17821"/>
        <dbReference type="ChEBI" id="CHEBI:43474"/>
        <dbReference type="ChEBI" id="CHEBI:57259"/>
        <dbReference type="EC" id="2.4.2.4"/>
    </reaction>
</comment>
<comment type="pathway">
    <text evidence="1">Pyrimidine metabolism; dTMP biosynthesis via salvage pathway; dTMP from thymine: step 1/2.</text>
</comment>
<comment type="subunit">
    <text evidence="1">Homodimer.</text>
</comment>
<comment type="similarity">
    <text evidence="1">Belongs to the thymidine/pyrimidine-nucleoside phosphorylase family.</text>
</comment>
<gene>
    <name evidence="1" type="primary">deoA</name>
    <name type="ordered locus">Spea_3047</name>
</gene>
<reference key="1">
    <citation type="submission" date="2007-10" db="EMBL/GenBank/DDBJ databases">
        <title>Complete sequence of Shewanella pealeana ATCC 700345.</title>
        <authorList>
            <consortium name="US DOE Joint Genome Institute"/>
            <person name="Copeland A."/>
            <person name="Lucas S."/>
            <person name="Lapidus A."/>
            <person name="Barry K."/>
            <person name="Glavina del Rio T."/>
            <person name="Dalin E."/>
            <person name="Tice H."/>
            <person name="Pitluck S."/>
            <person name="Chertkov O."/>
            <person name="Brettin T."/>
            <person name="Bruce D."/>
            <person name="Detter J.C."/>
            <person name="Han C."/>
            <person name="Schmutz J."/>
            <person name="Larimer F."/>
            <person name="Land M."/>
            <person name="Hauser L."/>
            <person name="Kyrpides N."/>
            <person name="Kim E."/>
            <person name="Zhao J.-S.Z."/>
            <person name="Manno D."/>
            <person name="Hawari J."/>
            <person name="Richardson P."/>
        </authorList>
    </citation>
    <scope>NUCLEOTIDE SEQUENCE [LARGE SCALE GENOMIC DNA]</scope>
    <source>
        <strain>ATCC 700345 / ANG-SQ1</strain>
    </source>
</reference>
<dbReference type="EC" id="2.4.2.4" evidence="1"/>
<dbReference type="EMBL" id="CP000851">
    <property type="protein sequence ID" value="ABV88364.1"/>
    <property type="molecule type" value="Genomic_DNA"/>
</dbReference>
<dbReference type="RefSeq" id="WP_012156268.1">
    <property type="nucleotide sequence ID" value="NC_009901.1"/>
</dbReference>
<dbReference type="SMR" id="A8H727"/>
<dbReference type="STRING" id="398579.Spea_3047"/>
<dbReference type="KEGG" id="spl:Spea_3047"/>
<dbReference type="eggNOG" id="COG0213">
    <property type="taxonomic scope" value="Bacteria"/>
</dbReference>
<dbReference type="HOGENOM" id="CLU_025040_0_1_6"/>
<dbReference type="OrthoDB" id="9763887at2"/>
<dbReference type="UniPathway" id="UPA00578">
    <property type="reaction ID" value="UER00638"/>
</dbReference>
<dbReference type="Proteomes" id="UP000002608">
    <property type="component" value="Chromosome"/>
</dbReference>
<dbReference type="GO" id="GO:0005829">
    <property type="term" value="C:cytosol"/>
    <property type="evidence" value="ECO:0007669"/>
    <property type="project" value="TreeGrafter"/>
</dbReference>
<dbReference type="GO" id="GO:0004645">
    <property type="term" value="F:1,4-alpha-oligoglucan phosphorylase activity"/>
    <property type="evidence" value="ECO:0007669"/>
    <property type="project" value="InterPro"/>
</dbReference>
<dbReference type="GO" id="GO:0009032">
    <property type="term" value="F:thymidine phosphorylase activity"/>
    <property type="evidence" value="ECO:0007669"/>
    <property type="project" value="UniProtKB-UniRule"/>
</dbReference>
<dbReference type="GO" id="GO:0006206">
    <property type="term" value="P:pyrimidine nucleobase metabolic process"/>
    <property type="evidence" value="ECO:0007669"/>
    <property type="project" value="InterPro"/>
</dbReference>
<dbReference type="GO" id="GO:0046104">
    <property type="term" value="P:thymidine metabolic process"/>
    <property type="evidence" value="ECO:0007669"/>
    <property type="project" value="UniProtKB-UniRule"/>
</dbReference>
<dbReference type="FunFam" id="3.40.1030.10:FF:000001">
    <property type="entry name" value="Thymidine phosphorylase"/>
    <property type="match status" value="1"/>
</dbReference>
<dbReference type="FunFam" id="3.90.1170.30:FF:000001">
    <property type="entry name" value="Thymidine phosphorylase"/>
    <property type="match status" value="1"/>
</dbReference>
<dbReference type="Gene3D" id="3.40.1030.10">
    <property type="entry name" value="Nucleoside phosphorylase/phosphoribosyltransferase catalytic domain"/>
    <property type="match status" value="1"/>
</dbReference>
<dbReference type="Gene3D" id="3.90.1170.30">
    <property type="entry name" value="Pyrimidine nucleoside phosphorylase-like, C-terminal domain"/>
    <property type="match status" value="1"/>
</dbReference>
<dbReference type="Gene3D" id="1.20.970.10">
    <property type="entry name" value="Transferase, Pyrimidine Nucleoside Phosphorylase, Chain C"/>
    <property type="match status" value="1"/>
</dbReference>
<dbReference type="HAMAP" id="MF_01628">
    <property type="entry name" value="Thymid_phosp"/>
    <property type="match status" value="1"/>
</dbReference>
<dbReference type="InterPro" id="IPR000312">
    <property type="entry name" value="Glycosyl_Trfase_fam3"/>
</dbReference>
<dbReference type="InterPro" id="IPR017459">
    <property type="entry name" value="Glycosyl_Trfase_fam3_N_dom"/>
</dbReference>
<dbReference type="InterPro" id="IPR036320">
    <property type="entry name" value="Glycosyl_Trfase_fam3_N_dom_sf"/>
</dbReference>
<dbReference type="InterPro" id="IPR035902">
    <property type="entry name" value="Nuc_phospho_transferase"/>
</dbReference>
<dbReference type="InterPro" id="IPR036566">
    <property type="entry name" value="PYNP-like_C_sf"/>
</dbReference>
<dbReference type="InterPro" id="IPR013102">
    <property type="entry name" value="PYNP_C"/>
</dbReference>
<dbReference type="InterPro" id="IPR018090">
    <property type="entry name" value="Pyrmidine_PPas_bac/euk"/>
</dbReference>
<dbReference type="InterPro" id="IPR017872">
    <property type="entry name" value="Pyrmidine_PPase_CS"/>
</dbReference>
<dbReference type="InterPro" id="IPR000053">
    <property type="entry name" value="Thymidine/pyrmidine_PPase"/>
</dbReference>
<dbReference type="InterPro" id="IPR013465">
    <property type="entry name" value="Thymidine_Pase"/>
</dbReference>
<dbReference type="NCBIfam" id="NF004490">
    <property type="entry name" value="PRK05820.1"/>
    <property type="match status" value="1"/>
</dbReference>
<dbReference type="NCBIfam" id="TIGR02643">
    <property type="entry name" value="T_phosphoryl"/>
    <property type="match status" value="1"/>
</dbReference>
<dbReference type="NCBIfam" id="TIGR02644">
    <property type="entry name" value="Y_phosphoryl"/>
    <property type="match status" value="1"/>
</dbReference>
<dbReference type="PANTHER" id="PTHR10515">
    <property type="entry name" value="THYMIDINE PHOSPHORYLASE"/>
    <property type="match status" value="1"/>
</dbReference>
<dbReference type="PANTHER" id="PTHR10515:SF0">
    <property type="entry name" value="THYMIDINE PHOSPHORYLASE"/>
    <property type="match status" value="1"/>
</dbReference>
<dbReference type="Pfam" id="PF02885">
    <property type="entry name" value="Glycos_trans_3N"/>
    <property type="match status" value="1"/>
</dbReference>
<dbReference type="Pfam" id="PF00591">
    <property type="entry name" value="Glycos_transf_3"/>
    <property type="match status" value="1"/>
</dbReference>
<dbReference type="Pfam" id="PF07831">
    <property type="entry name" value="PYNP_C"/>
    <property type="match status" value="1"/>
</dbReference>
<dbReference type="PIRSF" id="PIRSF000478">
    <property type="entry name" value="TP_PyNP"/>
    <property type="match status" value="1"/>
</dbReference>
<dbReference type="SMART" id="SM00941">
    <property type="entry name" value="PYNP_C"/>
    <property type="match status" value="1"/>
</dbReference>
<dbReference type="SUPFAM" id="SSF52418">
    <property type="entry name" value="Nucleoside phosphorylase/phosphoribosyltransferase catalytic domain"/>
    <property type="match status" value="1"/>
</dbReference>
<dbReference type="SUPFAM" id="SSF47648">
    <property type="entry name" value="Nucleoside phosphorylase/phosphoribosyltransferase N-terminal domain"/>
    <property type="match status" value="1"/>
</dbReference>
<dbReference type="SUPFAM" id="SSF54680">
    <property type="entry name" value="Pyrimidine nucleoside phosphorylase C-terminal domain"/>
    <property type="match status" value="1"/>
</dbReference>
<dbReference type="PROSITE" id="PS00647">
    <property type="entry name" value="THYMID_PHOSPHORYLASE"/>
    <property type="match status" value="1"/>
</dbReference>
<organism>
    <name type="scientific">Shewanella pealeana (strain ATCC 700345 / ANG-SQ1)</name>
    <dbReference type="NCBI Taxonomy" id="398579"/>
    <lineage>
        <taxon>Bacteria</taxon>
        <taxon>Pseudomonadati</taxon>
        <taxon>Pseudomonadota</taxon>
        <taxon>Gammaproteobacteria</taxon>
        <taxon>Alteromonadales</taxon>
        <taxon>Shewanellaceae</taxon>
        <taxon>Shewanella</taxon>
    </lineage>
</organism>
<keyword id="KW-0328">Glycosyltransferase</keyword>
<keyword id="KW-1185">Reference proteome</keyword>
<keyword id="KW-0808">Transferase</keyword>
<name>TYPH_SHEPA</name>
<sequence length="443" mass="47077">MFLAQEIIRKKRNAETLSTEEIQFFVKGITNNTVSEGQIAALGMAVYFNDMNMDERIALTTAMRDSGTVLNWQSLDLNGPIIDKHSTGGVGDVISLMLGPMAAACGGYVPMISGRGLGHTGGTLDKFDAIPGYNTEPDSALFRKVVKEAGVAIIGQTGDLVPADKRFYSIRDNTATVESISLITASILSKKLAAGLDALAMDVKVGTGAFMPTYEASEELARSITAVANGAGTKTTALLTDMNQVLASCAGNALEVKEAVDFMTGAYRNPRLYEVTMGLCAEMLVLGGLASNESEARVKLNTVLDNGKAAEIFGRMVSGLGGPADFVENYSKYLPDSQIIRPVYADRSGFASAMDTRELGLAVVTLGGGRRKPGDALDYSVGLSKVCALGDEINPEQPIAFIHAQSESAFAEAEAAVKKAIHIGDSKPEKTPEIYRYIRESDL</sequence>
<proteinExistence type="inferred from homology"/>
<accession>A8H727</accession>
<evidence type="ECO:0000255" key="1">
    <source>
        <dbReference type="HAMAP-Rule" id="MF_01628"/>
    </source>
</evidence>
<feature type="chain" id="PRO_1000088111" description="Thymidine phosphorylase">
    <location>
        <begin position="1"/>
        <end position="443"/>
    </location>
</feature>
<protein>
    <recommendedName>
        <fullName evidence="1">Thymidine phosphorylase</fullName>
        <ecNumber evidence="1">2.4.2.4</ecNumber>
    </recommendedName>
    <alternativeName>
        <fullName evidence="1">TdRPase</fullName>
    </alternativeName>
</protein>